<comment type="function">
    <text evidence="1 3 5">Structural component of specialized membrane microdomains known as tetraspanin-enriched microdomains (TERMs), which act as platforms for receptor clustering and signaling. Plays a role in various cellular and molecular mechanism through its association with both integrin and non-integrin proteins. These interactions facilitate critical cellular functions, including cell-to-cell communication, wound healing, platelet aggregation, trafficking, cell motility, and angiogenesis (PubMed:15199151, PubMed:16410781). Via interaction with JAM-A/F11R and integrin ITGA3:ITGB1, promotes the recruitment of signaling molecules such as RAC1, CDC42 and RhoGTPases to facilitate the polarization of epithelial cells and the reorganization of the actin cytoskeleton, which are critical steps in cell migration process. Regulates the glycosylation pattern of ITGA3:ITGB1 thereby modulating its activity. Plays an essential role in the maintenance of central laminin-binding integrin ITGA6:ITGB4-containing adhesion complexes. Essential for the proper assembly of the glomerular and tubular basement membranes in kidney (PubMed:17015618). Contributes to T-cell activation by modulating integrin signaling leading to activation of downstream targets PTK2 and MAPK1/MAPK3.</text>
</comment>
<comment type="subunit">
    <text evidence="1">Interacts with integrins ITGA3:ITGB1, ITGA5:ITGB1, ITGA3:ITGB1 and ITGA6:ITGB4 and with CD9 and CD181. Interacts (via the second extracellular domain) with integrin ITGAV:ITGB3. Interacts with ITGA3; this interaction modulates ITGA3 glycosylation pattern. Interacts with F11R. Interacts with RAC1 and CDC42; these interactions mediate physical association of RAC1 and CDC42 with integrin adhesion receptor complexes.</text>
</comment>
<comment type="interaction">
    <interactant intactId="EBI-8369654">
        <id>O35566</id>
    </interactant>
    <interactant intactId="EBI-8398907">
        <id>Q62470</id>
        <label>Itga3</label>
    </interactant>
    <organismsDiffer>false</organismsDiffer>
    <experiments>2</experiments>
</comment>
<comment type="subcellular location">
    <subcellularLocation>
        <location evidence="1">Cell membrane</location>
        <topology evidence="1">Multi-pass membrane protein</topology>
    </subcellularLocation>
    <text evidence="1">Relocalizes to the immune synapse in T-cells upon activation.</text>
</comment>
<comment type="induction">
    <text evidence="4">In response to wounding.</text>
</comment>
<comment type="PTM">
    <text evidence="1">Palmitoylated. Palmitoylation by ZDHHC2 regulates CD151 expression, association with other tetraspanin family proteins and function in cell adhesion.</text>
</comment>
<comment type="PTM">
    <text evidence="1">Ubiquitinated by RNF128 on lysine residues present in the tetraspanin amino terminus via 'Lys-48'-linked ubiquitin leading to proteasomal degradation.</text>
</comment>
<comment type="disruption phenotype">
    <text evidence="3 4 5">Cd151-null mice are normal, healthy, and fertile (PubMed:15199151). However, they display unstable hemostasis and their T-lymphocytes are hyperresponsive to mitogenic stimulation (PubMed:15199151). Mice also show a defect in wound healing characterized by a retarded re-epithelialization and wound closure (PubMed:16410781). Kidneys of Cd151-null mice reveal severe renal pathology including loss of podocyte foot processes, glomerulosclerosis, and cystic tubular dilation (PubMed:17015618).</text>
</comment>
<comment type="similarity">
    <text evidence="6">Belongs to the tetraspanin (TM4SF) family.</text>
</comment>
<reference key="1">
    <citation type="journal article" date="1997" name="Biochim. Biophys. Acta">
        <title>Molecular cloning and expression of mouse homologue of SFA-1/PETA-3 (CD151), a member of the transmembrane 4 superfamily.</title>
        <authorList>
            <person name="Hasegawa H."/>
            <person name="Watanabe H."/>
            <person name="Nomura T."/>
            <person name="Utsunomiya Y."/>
            <person name="Yanagisawa K."/>
            <person name="Fujita S."/>
        </authorList>
    </citation>
    <scope>NUCLEOTIDE SEQUENCE [MRNA]</scope>
</reference>
<reference key="2">
    <citation type="journal article" date="1998" name="Biochim. Biophys. Acta">
        <title>Characterisation of the mouse homologue of CD151 (PETA-3/SFA-1); genomic structure, chromosomal localisation and identification of 2 novel splice forms.</title>
        <authorList>
            <person name="Fitter S."/>
            <person name="Seldin M.F."/>
            <person name="Ashman L.K."/>
        </authorList>
    </citation>
    <scope>NUCLEOTIDE SEQUENCE [GENOMIC DNA / MRNA]</scope>
    <source>
        <strain>129/Sv</strain>
    </source>
</reference>
<reference key="3">
    <citation type="journal article" date="2010" name="Cell">
        <title>A tissue-specific atlas of mouse protein phosphorylation and expression.</title>
        <authorList>
            <person name="Huttlin E.L."/>
            <person name="Jedrychowski M.P."/>
            <person name="Elias J.E."/>
            <person name="Goswami T."/>
            <person name="Rad R."/>
            <person name="Beausoleil S.A."/>
            <person name="Villen J."/>
            <person name="Haas W."/>
            <person name="Sowa M.E."/>
            <person name="Gygi S.P."/>
        </authorList>
    </citation>
    <scope>IDENTIFICATION BY MASS SPECTROMETRY [LARGE SCALE ANALYSIS]</scope>
    <source>
        <tissue>Brain</tissue>
        <tissue>Brown adipose tissue</tissue>
        <tissue>Heart</tissue>
        <tissue>Kidney</tissue>
        <tissue>Liver</tissue>
        <tissue>Lung</tissue>
        <tissue>Spleen</tissue>
        <tissue>Testis</tissue>
    </source>
</reference>
<reference key="4">
    <citation type="journal article" date="2004" name="Mol. Cell. Biol.">
        <title>Characterization of mice lacking the tetraspanin superfamily member CD151.</title>
        <authorList>
            <person name="Wright M.D."/>
            <person name="Geary S.M."/>
            <person name="Fitter S."/>
            <person name="Moseley G.W."/>
            <person name="Lau L.M."/>
            <person name="Sheng K.C."/>
            <person name="Apostolopoulos V."/>
            <person name="Stanley E.G."/>
            <person name="Jackson D.E."/>
            <person name="Ashman L.K."/>
        </authorList>
    </citation>
    <scope>FUNCTION</scope>
    <scope>DISRUPTION PHENOTYPE</scope>
</reference>
<reference key="5">
    <citation type="journal article" date="2006" name="J. Invest. Dermatol.">
        <title>Wound healing is defective in mice lacking tetraspanin CD151.</title>
        <authorList>
            <person name="Cowin A.J."/>
            <person name="Adams D."/>
            <person name="Geary S.M."/>
            <person name="Wright M.D."/>
            <person name="Jones J.C."/>
            <person name="Ashman L.K."/>
        </authorList>
    </citation>
    <scope>FUNCTION</scope>
    <scope>DISRUPTION PHENOTYPE</scope>
    <scope>INDUCTION BY WOUNDING</scope>
</reference>
<reference key="6">
    <citation type="journal article" date="2006" name="J. Cell Biol.">
        <title>Kidney failure in mice lacking the tetraspanin CD151.</title>
        <authorList>
            <person name="Sachs N."/>
            <person name="Kreft M."/>
            <person name="van den Bergh Weerman M.A."/>
            <person name="Beynon A.J."/>
            <person name="Peters T.A."/>
            <person name="Weening J.J."/>
            <person name="Sonnenberg A."/>
        </authorList>
    </citation>
    <scope>DISRUPTION PHENOTYPE</scope>
    <scope>FUNCTION</scope>
</reference>
<dbReference type="EMBL" id="D89290">
    <property type="protein sequence ID" value="BAA22447.1"/>
    <property type="molecule type" value="mRNA"/>
</dbReference>
<dbReference type="EMBL" id="AF033620">
    <property type="protein sequence ID" value="AAC25952.1"/>
    <property type="molecule type" value="Genomic_DNA"/>
</dbReference>
<dbReference type="EMBL" id="U89772">
    <property type="protein sequence ID" value="AAC25976.1"/>
    <property type="molecule type" value="mRNA"/>
</dbReference>
<dbReference type="CCDS" id="CCDS22017.1"/>
<dbReference type="RefSeq" id="NP_001104519.1">
    <property type="nucleotide sequence ID" value="NM_001111049.1"/>
</dbReference>
<dbReference type="RefSeq" id="NP_001104520.1">
    <property type="nucleotide sequence ID" value="NM_001111050.1"/>
</dbReference>
<dbReference type="RefSeq" id="NP_033972.2">
    <property type="nucleotide sequence ID" value="NM_009842.3"/>
</dbReference>
<dbReference type="SMR" id="O35566"/>
<dbReference type="BioGRID" id="198574">
    <property type="interactions" value="1"/>
</dbReference>
<dbReference type="FunCoup" id="O35566">
    <property type="interactions" value="112"/>
</dbReference>
<dbReference type="IntAct" id="O35566">
    <property type="interactions" value="2"/>
</dbReference>
<dbReference type="STRING" id="10090.ENSMUSP00000101622"/>
<dbReference type="GlyCosmos" id="O35566">
    <property type="glycosylation" value="1 site, No reported glycans"/>
</dbReference>
<dbReference type="GlyGen" id="O35566">
    <property type="glycosylation" value="2 sites, 1 O-linked glycan (1 site)"/>
</dbReference>
<dbReference type="iPTMnet" id="O35566"/>
<dbReference type="PhosphoSitePlus" id="O35566"/>
<dbReference type="SwissPalm" id="O35566"/>
<dbReference type="PaxDb" id="10090-ENSMUSP00000101622"/>
<dbReference type="PeptideAtlas" id="O35566"/>
<dbReference type="ProteomicsDB" id="281259"/>
<dbReference type="Pumba" id="O35566"/>
<dbReference type="Antibodypedia" id="2778">
    <property type="antibodies" value="692 antibodies from 38 providers"/>
</dbReference>
<dbReference type="DNASU" id="12476"/>
<dbReference type="Ensembl" id="ENSMUST00000058746.7">
    <property type="protein sequence ID" value="ENSMUSP00000061636.6"/>
    <property type="gene ID" value="ENSMUSG00000025510.15"/>
</dbReference>
<dbReference type="Ensembl" id="ENSMUST00000106000.10">
    <property type="protein sequence ID" value="ENSMUSP00000101622.3"/>
    <property type="gene ID" value="ENSMUSG00000025510.15"/>
</dbReference>
<dbReference type="Ensembl" id="ENSMUST00000177840.9">
    <property type="protein sequence ID" value="ENSMUSP00000136331.2"/>
    <property type="gene ID" value="ENSMUSG00000025510.15"/>
</dbReference>
<dbReference type="GeneID" id="12476"/>
<dbReference type="KEGG" id="mmu:12476"/>
<dbReference type="UCSC" id="uc009kll.2">
    <property type="organism name" value="mouse"/>
</dbReference>
<dbReference type="AGR" id="MGI:1096360"/>
<dbReference type="CTD" id="977"/>
<dbReference type="MGI" id="MGI:1096360">
    <property type="gene designation" value="Cd151"/>
</dbReference>
<dbReference type="VEuPathDB" id="HostDB:ENSMUSG00000025510"/>
<dbReference type="eggNOG" id="KOG3882">
    <property type="taxonomic scope" value="Eukaryota"/>
</dbReference>
<dbReference type="GeneTree" id="ENSGT00940000157760"/>
<dbReference type="HOGENOM" id="CLU_055524_5_0_1"/>
<dbReference type="InParanoid" id="O35566"/>
<dbReference type="OMA" id="DSCCKTR"/>
<dbReference type="OrthoDB" id="438211at2759"/>
<dbReference type="PhylomeDB" id="O35566"/>
<dbReference type="TreeFam" id="TF352892"/>
<dbReference type="Reactome" id="R-MMU-446107">
    <property type="pathway name" value="Type I hemidesmosome assembly"/>
</dbReference>
<dbReference type="BioGRID-ORCS" id="12476">
    <property type="hits" value="5 hits in 79 CRISPR screens"/>
</dbReference>
<dbReference type="ChiTaRS" id="Cd151">
    <property type="organism name" value="mouse"/>
</dbReference>
<dbReference type="PRO" id="PR:O35566"/>
<dbReference type="Proteomes" id="UP000000589">
    <property type="component" value="Chromosome 7"/>
</dbReference>
<dbReference type="RNAct" id="O35566">
    <property type="molecule type" value="protein"/>
</dbReference>
<dbReference type="Bgee" id="ENSMUSG00000025510">
    <property type="expression patterns" value="Expressed in endothelial cell of lymphatic vessel and 260 other cell types or tissues"/>
</dbReference>
<dbReference type="ExpressionAtlas" id="O35566">
    <property type="expression patterns" value="baseline and differential"/>
</dbReference>
<dbReference type="GO" id="GO:0005604">
    <property type="term" value="C:basement membrane"/>
    <property type="evidence" value="ECO:0007669"/>
    <property type="project" value="Ensembl"/>
</dbReference>
<dbReference type="GO" id="GO:0009986">
    <property type="term" value="C:cell surface"/>
    <property type="evidence" value="ECO:0000266"/>
    <property type="project" value="MGI"/>
</dbReference>
<dbReference type="GO" id="GO:0005886">
    <property type="term" value="C:plasma membrane"/>
    <property type="evidence" value="ECO:0007669"/>
    <property type="project" value="UniProtKB-SubCell"/>
</dbReference>
<dbReference type="GO" id="GO:0005178">
    <property type="term" value="F:integrin binding"/>
    <property type="evidence" value="ECO:0000250"/>
    <property type="project" value="UniProtKB"/>
</dbReference>
<dbReference type="GO" id="GO:0016477">
    <property type="term" value="P:cell migration"/>
    <property type="evidence" value="ECO:0000315"/>
    <property type="project" value="MGI"/>
</dbReference>
<dbReference type="GO" id="GO:0030335">
    <property type="term" value="P:positive regulation of cell migration"/>
    <property type="evidence" value="ECO:0000266"/>
    <property type="project" value="MGI"/>
</dbReference>
<dbReference type="GO" id="GO:0045807">
    <property type="term" value="P:positive regulation of endocytosis"/>
    <property type="evidence" value="ECO:0000266"/>
    <property type="project" value="MGI"/>
</dbReference>
<dbReference type="GO" id="GO:0042098">
    <property type="term" value="P:T cell proliferation"/>
    <property type="evidence" value="ECO:0000315"/>
    <property type="project" value="MGI"/>
</dbReference>
<dbReference type="GO" id="GO:0044319">
    <property type="term" value="P:wound healing, spreading of cells"/>
    <property type="evidence" value="ECO:0000266"/>
    <property type="project" value="MGI"/>
</dbReference>
<dbReference type="CDD" id="cd03155">
    <property type="entry name" value="CD151_like_LEL"/>
    <property type="match status" value="1"/>
</dbReference>
<dbReference type="FunFam" id="1.10.1450.10:FF:000005">
    <property type="entry name" value="Tetraspanin"/>
    <property type="match status" value="1"/>
</dbReference>
<dbReference type="Gene3D" id="1.10.1450.10">
    <property type="entry name" value="Tetraspanin"/>
    <property type="match status" value="1"/>
</dbReference>
<dbReference type="InterPro" id="IPR018499">
    <property type="entry name" value="Tetraspanin/Peripherin"/>
</dbReference>
<dbReference type="InterPro" id="IPR000301">
    <property type="entry name" value="Tetraspanin_animals"/>
</dbReference>
<dbReference type="InterPro" id="IPR018503">
    <property type="entry name" value="Tetraspanin_CS"/>
</dbReference>
<dbReference type="InterPro" id="IPR008952">
    <property type="entry name" value="Tetraspanin_EC2_sf"/>
</dbReference>
<dbReference type="PANTHER" id="PTHR19282:SF487">
    <property type="entry name" value="CD151 ANTIGEN"/>
    <property type="match status" value="1"/>
</dbReference>
<dbReference type="PANTHER" id="PTHR19282">
    <property type="entry name" value="TETRASPANIN"/>
    <property type="match status" value="1"/>
</dbReference>
<dbReference type="Pfam" id="PF00335">
    <property type="entry name" value="Tetraspanin"/>
    <property type="match status" value="1"/>
</dbReference>
<dbReference type="PIRSF" id="PIRSF002419">
    <property type="entry name" value="Tetraspanin"/>
    <property type="match status" value="1"/>
</dbReference>
<dbReference type="PRINTS" id="PR00259">
    <property type="entry name" value="TMFOUR"/>
</dbReference>
<dbReference type="SUPFAM" id="SSF48652">
    <property type="entry name" value="Tetraspanin"/>
    <property type="match status" value="1"/>
</dbReference>
<dbReference type="PROSITE" id="PS00421">
    <property type="entry name" value="TM4_1"/>
    <property type="match status" value="1"/>
</dbReference>
<evidence type="ECO:0000250" key="1">
    <source>
        <dbReference type="UniProtKB" id="P48509"/>
    </source>
</evidence>
<evidence type="ECO:0000255" key="2"/>
<evidence type="ECO:0000269" key="3">
    <source>
    </source>
</evidence>
<evidence type="ECO:0000269" key="4">
    <source>
    </source>
</evidence>
<evidence type="ECO:0000269" key="5">
    <source>
    </source>
</evidence>
<evidence type="ECO:0000305" key="6"/>
<organism>
    <name type="scientific">Mus musculus</name>
    <name type="common">Mouse</name>
    <dbReference type="NCBI Taxonomy" id="10090"/>
    <lineage>
        <taxon>Eukaryota</taxon>
        <taxon>Metazoa</taxon>
        <taxon>Chordata</taxon>
        <taxon>Craniata</taxon>
        <taxon>Vertebrata</taxon>
        <taxon>Euteleostomi</taxon>
        <taxon>Mammalia</taxon>
        <taxon>Eutheria</taxon>
        <taxon>Euarchontoglires</taxon>
        <taxon>Glires</taxon>
        <taxon>Rodentia</taxon>
        <taxon>Myomorpha</taxon>
        <taxon>Muroidea</taxon>
        <taxon>Muridae</taxon>
        <taxon>Murinae</taxon>
        <taxon>Mus</taxon>
        <taxon>Mus</taxon>
    </lineage>
</organism>
<gene>
    <name type="primary">Cd151</name>
    <name type="synonym">Peta3</name>
</gene>
<sequence>MGEFNEKKATCGTVCLKYLLFTYNCCFWLAGLAVMAVGIWTLALKSDYISLLASSTYLATAYILVVAGVVVMVTGVLGCCATFKERRNLLRLYFILLLIIFLLEIIAGILAYVYYQQLNTELKENLKDTMVKRYHQSGHEGVSSAVDKLQQEFHCCGSNNSQDWQDSEWIRSGEADSRVVPDSCCKTMVAGCGKRDHASNIYKVEGGCITKLETFIQEHLRVIGAVGIGIACVQVFGMIFTCCLYRSLKLEHY</sequence>
<keyword id="KW-1003">Cell membrane</keyword>
<keyword id="KW-0325">Glycoprotein</keyword>
<keyword id="KW-0449">Lipoprotein</keyword>
<keyword id="KW-0472">Membrane</keyword>
<keyword id="KW-0564">Palmitate</keyword>
<keyword id="KW-1185">Reference proteome</keyword>
<keyword id="KW-0812">Transmembrane</keyword>
<keyword id="KW-1133">Transmembrane helix</keyword>
<keyword id="KW-0832">Ubl conjugation</keyword>
<protein>
    <recommendedName>
        <fullName>CD151 antigen</fullName>
    </recommendedName>
    <alternativeName>
        <fullName>GP27</fullName>
    </alternativeName>
    <alternativeName>
        <fullName>Membrane glycoprotein SFA-1</fullName>
    </alternativeName>
    <alternativeName>
        <fullName>Platelet-endothelial tetraspan antigen 3</fullName>
        <shortName>PETA-3</shortName>
    </alternativeName>
    <cdAntigenName>CD151</cdAntigenName>
</protein>
<proteinExistence type="evidence at protein level"/>
<accession>O35566</accession>
<accession>O89118</accession>
<feature type="chain" id="PRO_0000219232" description="CD151 antigen">
    <location>
        <begin position="1"/>
        <end position="253"/>
    </location>
</feature>
<feature type="topological domain" description="Cytoplasmic" evidence="2">
    <location>
        <begin position="1"/>
        <end position="18"/>
    </location>
</feature>
<feature type="transmembrane region" description="Helical" evidence="2">
    <location>
        <begin position="19"/>
        <end position="39"/>
    </location>
</feature>
<feature type="topological domain" description="Extracellular" evidence="2">
    <location>
        <begin position="40"/>
        <end position="57"/>
    </location>
</feature>
<feature type="transmembrane region" description="Helical" evidence="2">
    <location>
        <begin position="58"/>
        <end position="78"/>
    </location>
</feature>
<feature type="topological domain" description="Cytoplasmic" evidence="2">
    <location>
        <begin position="79"/>
        <end position="91"/>
    </location>
</feature>
<feature type="transmembrane region" description="Helical" evidence="2">
    <location>
        <begin position="92"/>
        <end position="112"/>
    </location>
</feature>
<feature type="topological domain" description="Extracellular" evidence="2">
    <location>
        <begin position="113"/>
        <end position="221"/>
    </location>
</feature>
<feature type="transmembrane region" description="Helical" evidence="2">
    <location>
        <begin position="222"/>
        <end position="242"/>
    </location>
</feature>
<feature type="topological domain" description="Cytoplasmic" evidence="2">
    <location>
        <begin position="243"/>
        <end position="253"/>
    </location>
</feature>
<feature type="lipid moiety-binding region" description="S-palmitoyl cysteine" evidence="1">
    <location>
        <position position="11"/>
    </location>
</feature>
<feature type="lipid moiety-binding region" description="S-palmitoyl cysteine" evidence="1">
    <location>
        <position position="15"/>
    </location>
</feature>
<feature type="lipid moiety-binding region" description="S-palmitoyl cysteine" evidence="1">
    <location>
        <position position="242"/>
    </location>
</feature>
<feature type="lipid moiety-binding region" description="S-palmitoyl cysteine" evidence="1">
    <location>
        <position position="243"/>
    </location>
</feature>
<feature type="glycosylation site" description="N-linked (GlcNAc...) asparagine" evidence="2">
    <location>
        <position position="159"/>
    </location>
</feature>
<feature type="sequence conflict" description="In Ref. 1; BAA22447." evidence="6" ref="1">
    <original>G</original>
    <variation>S</variation>
    <location>
        <position position="237"/>
    </location>
</feature>
<name>CD151_MOUSE</name>